<feature type="signal peptide" evidence="5 6">
    <location>
        <begin position="1"/>
        <end position="21"/>
    </location>
</feature>
<feature type="chain" id="PRO_0000026482" description="Tubulointerstitial nephritis antigen-like">
    <location>
        <begin position="22"/>
        <end position="467"/>
    </location>
</feature>
<feature type="domain" description="SMB" evidence="2">
    <location>
        <begin position="50"/>
        <end position="98"/>
    </location>
</feature>
<feature type="glycosylation site" description="N-linked (GlcNAc...) asparagine" evidence="7">
    <location>
        <position position="78"/>
    </location>
</feature>
<feature type="glycosylation site" description="N-linked (GlcNAc...) asparagine" evidence="7">
    <location>
        <position position="161"/>
    </location>
</feature>
<feature type="disulfide bond" description="Alternate" evidence="2">
    <location>
        <begin position="54"/>
        <end position="73"/>
    </location>
</feature>
<feature type="disulfide bond" description="Alternate" evidence="2">
    <location>
        <begin position="71"/>
        <end position="85"/>
    </location>
</feature>
<feature type="disulfide bond" description="Alternate" evidence="2">
    <location>
        <begin position="71"/>
        <end position="73"/>
    </location>
</feature>
<feature type="disulfide bond" evidence="2">
    <location>
        <begin position="77"/>
        <end position="84"/>
    </location>
</feature>
<feature type="disulfide bond" description="Alternate" evidence="2">
    <location>
        <begin position="85"/>
        <end position="92"/>
    </location>
</feature>
<feature type="splice variant" id="VSP_013094" description="In isoform 2." evidence="9 10">
    <location>
        <begin position="1"/>
        <end position="134"/>
    </location>
</feature>
<feature type="splice variant" id="VSP_043712" description="In isoform 3." evidence="8">
    <location>
        <begin position="126"/>
        <end position="156"/>
    </location>
</feature>
<feature type="splice variant" id="VSP_013095" description="In isoform 2." evidence="9 10">
    <original>CDQEPCLVDPDMIKAINQGNYGWQAGNHSAFWGMTLDEGIRYRLGTIRPSSSVMNMHEIY</original>
    <variation>MVLGSSTQVKIGGSWNPAAAGGLKIKLQKALDLVALQCQWAPEGQARAEQEADRATFILQ</variation>
    <location>
        <begin position="135"/>
        <end position="194"/>
    </location>
</feature>
<feature type="splice variant" id="VSP_013096" description="In isoform 2." evidence="9 10">
    <original>G</original>
    <variation>GYAATGDVGREEGKELRGHGLGHDALSLSAFAPSCCLCR</variation>
    <location>
        <position position="286"/>
    </location>
</feature>
<feature type="splice variant" id="VSP_013097" description="In isoform 2." evidence="9 10">
    <original>ALMEVHEDFFLYKGGIY</original>
    <variation>GKPPYPAPWFQKLVPA</variation>
    <location>
        <begin position="365"/>
        <end position="381"/>
    </location>
</feature>
<feature type="splice variant" id="VSP_013098" description="In isoform 2." evidence="9 10">
    <location>
        <begin position="382"/>
        <end position="467"/>
    </location>
</feature>
<feature type="sequence variant" id="VAR_051514" description="In dbSNP:rs17497479.">
    <original>A</original>
    <variation>S</variation>
    <location>
        <position position="69"/>
    </location>
</feature>
<feature type="sequence conflict" description="In Ref. 7; AAL55753." evidence="11" ref="7">
    <original>N</original>
    <variation>Y</variation>
    <location>
        <position position="333"/>
    </location>
</feature>
<feature type="sequence conflict" description="In Ref. 8; BAB55403." evidence="11" ref="8">
    <original>K</original>
    <variation>E</variation>
    <location>
        <position position="377"/>
    </location>
</feature>
<sequence length="467" mass="52387">MWRCPLGLLLLLPLAGHLALGAQQGRGRRELAPGLHLRGIRDAGGRYCQEQDLCCRGRADDCALPYLGAICYCDLFCNRTVSDCCPDFWDFCLGVPPPFPPIQGCMHGGRIYPVLGTYWDNCNRCTCQENRQWQCDQEPCLVDPDMIKAINQGNYGWQAGNHSAFWGMTLDEGIRYRLGTIRPSSSVMNMHEIYTVLNPGEVLPTAFEASEKWPNLIHEPLDQGNCAGSWAFSTAAVASDRVSIHSLGHMTPVLSPQNLLSCDTHQQQGCRGGRLDGAWWFLRRRGVVSDHCYPFSGRERDEAGPAPPCMMHSRAMGRGKRQATAHCPNSYVNNNDIYQVTPVYRLGSNDKEIMKELMENGPVQALMEVHEDFFLYKGGIYSHTPVSLGRPERYRRHGTHSVKITGWGEETLPDGRTLKYWTAANSWGPAWGERGHFRIVRGVNECDIESFVLGVWGRVGMEDMGHH</sequence>
<proteinExistence type="evidence at protein level"/>
<accession>Q9GZM7</accession>
<accession>A8K9Q5</accession>
<accession>B4DPK6</accession>
<accession>D3DPN8</accession>
<accession>Q8TEJ9</accession>
<accession>Q8WZ23</accession>
<accession>Q96GZ4</accession>
<accession>Q96JW3</accession>
<name>TINAL_HUMAN</name>
<evidence type="ECO:0000250" key="1"/>
<evidence type="ECO:0000255" key="2">
    <source>
        <dbReference type="PROSITE-ProRule" id="PRU00350"/>
    </source>
</evidence>
<evidence type="ECO:0000255" key="3">
    <source>
        <dbReference type="PROSITE-ProRule" id="PRU10089"/>
    </source>
</evidence>
<evidence type="ECO:0000269" key="4">
    <source>
    </source>
</evidence>
<evidence type="ECO:0000269" key="5">
    <source>
    </source>
</evidence>
<evidence type="ECO:0000269" key="6">
    <source>
    </source>
</evidence>
<evidence type="ECO:0000269" key="7">
    <source>
    </source>
</evidence>
<evidence type="ECO:0000303" key="8">
    <source>
    </source>
</evidence>
<evidence type="ECO:0000303" key="9">
    <source>
    </source>
</evidence>
<evidence type="ECO:0000303" key="10">
    <source ref="5"/>
</evidence>
<evidence type="ECO:0000305" key="11"/>
<reference key="1">
    <citation type="journal article" date="2000" name="Biochem. Biophys. Res. Commun.">
        <title>Cloning, characterization, and expression of the human TIN-ag-RP gene encoding a novel putative extracellular matrix protein.</title>
        <authorList>
            <person name="Broemme N.C."/>
            <person name="Wex T."/>
            <person name="Wex H."/>
            <person name="Levy B."/>
            <person name="Lipyansky A."/>
            <person name="Broemme D."/>
        </authorList>
    </citation>
    <scope>NUCLEOTIDE SEQUENCE [GENOMIC DNA] (ISOFORM 1)</scope>
    <scope>SUBCELLULAR LOCATION</scope>
    <source>
        <tissue>Muscle</tissue>
    </source>
</reference>
<reference key="2">
    <citation type="journal article" date="2001" name="Biochemistry">
        <title>TIN-ag-RP, a novel catalytically inactive cathepsin B-related protein with EGF domains, is predominantly expressed in vascular smooth muscle cells.</title>
        <authorList>
            <person name="Wex T."/>
            <person name="Lipyansky A."/>
            <person name="Broemme N.C."/>
            <person name="Wex H."/>
            <person name="Guan X.Q."/>
            <person name="Broemme D."/>
        </authorList>
    </citation>
    <scope>NUCLEOTIDE SEQUENCE [MRNA] (ISOFORM 1)</scope>
    <scope>PROTEIN SEQUENCE OF 22-27</scope>
    <scope>TISSUE SPECIFICITY</scope>
    <scope>GLYCOSYLATION</scope>
    <scope>SUBCELLULAR LOCATION</scope>
    <source>
        <tissue>Muscle</tissue>
    </source>
</reference>
<reference key="3">
    <citation type="submission" date="1999-11" db="EMBL/GenBank/DDBJ databases">
        <title>Identification of oxidized-LDL responsive gene 2 (OLRG-2), encoding a novel extracellular matrix protein in vascular endothelial cells.</title>
        <authorList>
            <person name="Zhang K.M."/>
            <person name="Chen B.S."/>
        </authorList>
    </citation>
    <scope>NUCLEOTIDE SEQUENCE [MRNA] (ISOFORM 1)</scope>
</reference>
<reference key="4">
    <citation type="submission" date="2000-11" db="EMBL/GenBank/DDBJ databases">
        <title>Identification of a novel glucocorticoid-inducible cDNA partially homologous to tubulointerstitial nephritis antigen.</title>
        <authorList>
            <person name="Yoshida H."/>
            <person name="Takaishi K."/>
            <person name="Harada M."/>
            <person name="Nagasaka T."/>
            <person name="Tsurufuji S."/>
            <person name="Taniguchi M."/>
        </authorList>
    </citation>
    <scope>NUCLEOTIDE SEQUENCE [GENOMIC DNA / MRNA] (ISOFORM 1)</scope>
</reference>
<reference key="5">
    <citation type="submission" date="2002-01" db="EMBL/GenBank/DDBJ databases">
        <title>The nucleotide sequence of a long cDNA clone isolated from human spleen.</title>
        <authorList>
            <person name="Jikuya H."/>
            <person name="Takano J."/>
            <person name="Nomura N."/>
            <person name="Kikuno R."/>
            <person name="Nagase T."/>
            <person name="Ohara O."/>
        </authorList>
    </citation>
    <scope>NUCLEOTIDE SEQUENCE [LARGE SCALE MRNA] (ISOFORM 2)</scope>
    <source>
        <tissue>Placenta</tissue>
    </source>
</reference>
<reference key="6">
    <citation type="journal article" date="2003" name="Genome Res.">
        <title>The secreted protein discovery initiative (SPDI), a large-scale effort to identify novel human secreted and transmembrane proteins: a bioinformatics assessment.</title>
        <authorList>
            <person name="Clark H.F."/>
            <person name="Gurney A.L."/>
            <person name="Abaya E."/>
            <person name="Baker K."/>
            <person name="Baldwin D.T."/>
            <person name="Brush J."/>
            <person name="Chen J."/>
            <person name="Chow B."/>
            <person name="Chui C."/>
            <person name="Crowley C."/>
            <person name="Currell B."/>
            <person name="Deuel B."/>
            <person name="Dowd P."/>
            <person name="Eaton D."/>
            <person name="Foster J.S."/>
            <person name="Grimaldi C."/>
            <person name="Gu Q."/>
            <person name="Hass P.E."/>
            <person name="Heldens S."/>
            <person name="Huang A."/>
            <person name="Kim H.S."/>
            <person name="Klimowski L."/>
            <person name="Jin Y."/>
            <person name="Johnson S."/>
            <person name="Lee J."/>
            <person name="Lewis L."/>
            <person name="Liao D."/>
            <person name="Mark M.R."/>
            <person name="Robbie E."/>
            <person name="Sanchez C."/>
            <person name="Schoenfeld J."/>
            <person name="Seshagiri S."/>
            <person name="Simmons L."/>
            <person name="Singh J."/>
            <person name="Smith V."/>
            <person name="Stinson J."/>
            <person name="Vagts A."/>
            <person name="Vandlen R.L."/>
            <person name="Watanabe C."/>
            <person name="Wieand D."/>
            <person name="Woods K."/>
            <person name="Xie M.-H."/>
            <person name="Yansura D.G."/>
            <person name="Yi S."/>
            <person name="Yu G."/>
            <person name="Yuan J."/>
            <person name="Zhang M."/>
            <person name="Zhang Z."/>
            <person name="Goddard A.D."/>
            <person name="Wood W.I."/>
            <person name="Godowski P.J."/>
            <person name="Gray A.M."/>
        </authorList>
    </citation>
    <scope>NUCLEOTIDE SEQUENCE [LARGE SCALE MRNA] (ISOFORM 1)</scope>
</reference>
<reference key="7">
    <citation type="journal article" date="2004" name="Proc. Natl. Acad. Sci. U.S.A.">
        <title>Large-scale cDNA transfection screening for genes related to cancer development and progression.</title>
        <authorList>
            <person name="Wan D."/>
            <person name="Gong Y."/>
            <person name="Qin W."/>
            <person name="Zhang P."/>
            <person name="Li J."/>
            <person name="Wei L."/>
            <person name="Zhou X."/>
            <person name="Li H."/>
            <person name="Qiu X."/>
            <person name="Zhong F."/>
            <person name="He L."/>
            <person name="Yu J."/>
            <person name="Yao G."/>
            <person name="Jiang H."/>
            <person name="Qian L."/>
            <person name="Yu Y."/>
            <person name="Shu H."/>
            <person name="Chen X."/>
            <person name="Xu H."/>
            <person name="Guo M."/>
            <person name="Pan Z."/>
            <person name="Chen Y."/>
            <person name="Ge C."/>
            <person name="Yang S."/>
            <person name="Gu J."/>
        </authorList>
    </citation>
    <scope>NUCLEOTIDE SEQUENCE [LARGE SCALE MRNA] (ISOFORM 2)</scope>
</reference>
<reference key="8">
    <citation type="journal article" date="2004" name="Nat. Genet.">
        <title>Complete sequencing and characterization of 21,243 full-length human cDNAs.</title>
        <authorList>
            <person name="Ota T."/>
            <person name="Suzuki Y."/>
            <person name="Nishikawa T."/>
            <person name="Otsuki T."/>
            <person name="Sugiyama T."/>
            <person name="Irie R."/>
            <person name="Wakamatsu A."/>
            <person name="Hayashi K."/>
            <person name="Sato H."/>
            <person name="Nagai K."/>
            <person name="Kimura K."/>
            <person name="Makita H."/>
            <person name="Sekine M."/>
            <person name="Obayashi M."/>
            <person name="Nishi T."/>
            <person name="Shibahara T."/>
            <person name="Tanaka T."/>
            <person name="Ishii S."/>
            <person name="Yamamoto J."/>
            <person name="Saito K."/>
            <person name="Kawai Y."/>
            <person name="Isono Y."/>
            <person name="Nakamura Y."/>
            <person name="Nagahari K."/>
            <person name="Murakami K."/>
            <person name="Yasuda T."/>
            <person name="Iwayanagi T."/>
            <person name="Wagatsuma M."/>
            <person name="Shiratori A."/>
            <person name="Sudo H."/>
            <person name="Hosoiri T."/>
            <person name="Kaku Y."/>
            <person name="Kodaira H."/>
            <person name="Kondo H."/>
            <person name="Sugawara M."/>
            <person name="Takahashi M."/>
            <person name="Kanda K."/>
            <person name="Yokoi T."/>
            <person name="Furuya T."/>
            <person name="Kikkawa E."/>
            <person name="Omura Y."/>
            <person name="Abe K."/>
            <person name="Kamihara K."/>
            <person name="Katsuta N."/>
            <person name="Sato K."/>
            <person name="Tanikawa M."/>
            <person name="Yamazaki M."/>
            <person name="Ninomiya K."/>
            <person name="Ishibashi T."/>
            <person name="Yamashita H."/>
            <person name="Murakawa K."/>
            <person name="Fujimori K."/>
            <person name="Tanai H."/>
            <person name="Kimata M."/>
            <person name="Watanabe M."/>
            <person name="Hiraoka S."/>
            <person name="Chiba Y."/>
            <person name="Ishida S."/>
            <person name="Ono Y."/>
            <person name="Takiguchi S."/>
            <person name="Watanabe S."/>
            <person name="Yosida M."/>
            <person name="Hotuta T."/>
            <person name="Kusano J."/>
            <person name="Kanehori K."/>
            <person name="Takahashi-Fujii A."/>
            <person name="Hara H."/>
            <person name="Tanase T.-O."/>
            <person name="Nomura Y."/>
            <person name="Togiya S."/>
            <person name="Komai F."/>
            <person name="Hara R."/>
            <person name="Takeuchi K."/>
            <person name="Arita M."/>
            <person name="Imose N."/>
            <person name="Musashino K."/>
            <person name="Yuuki H."/>
            <person name="Oshima A."/>
            <person name="Sasaki N."/>
            <person name="Aotsuka S."/>
            <person name="Yoshikawa Y."/>
            <person name="Matsunawa H."/>
            <person name="Ichihara T."/>
            <person name="Shiohata N."/>
            <person name="Sano S."/>
            <person name="Moriya S."/>
            <person name="Momiyama H."/>
            <person name="Satoh N."/>
            <person name="Takami S."/>
            <person name="Terashima Y."/>
            <person name="Suzuki O."/>
            <person name="Nakagawa S."/>
            <person name="Senoh A."/>
            <person name="Mizoguchi H."/>
            <person name="Goto Y."/>
            <person name="Shimizu F."/>
            <person name="Wakebe H."/>
            <person name="Hishigaki H."/>
            <person name="Watanabe T."/>
            <person name="Sugiyama A."/>
            <person name="Takemoto M."/>
            <person name="Kawakami B."/>
            <person name="Yamazaki M."/>
            <person name="Watanabe K."/>
            <person name="Kumagai A."/>
            <person name="Itakura S."/>
            <person name="Fukuzumi Y."/>
            <person name="Fujimori Y."/>
            <person name="Komiyama M."/>
            <person name="Tashiro H."/>
            <person name="Tanigami A."/>
            <person name="Fujiwara T."/>
            <person name="Ono T."/>
            <person name="Yamada K."/>
            <person name="Fujii Y."/>
            <person name="Ozaki K."/>
            <person name="Hirao M."/>
            <person name="Ohmori Y."/>
            <person name="Kawabata A."/>
            <person name="Hikiji T."/>
            <person name="Kobatake N."/>
            <person name="Inagaki H."/>
            <person name="Ikema Y."/>
            <person name="Okamoto S."/>
            <person name="Okitani R."/>
            <person name="Kawakami T."/>
            <person name="Noguchi S."/>
            <person name="Itoh T."/>
            <person name="Shigeta K."/>
            <person name="Senba T."/>
            <person name="Matsumura K."/>
            <person name="Nakajima Y."/>
            <person name="Mizuno T."/>
            <person name="Morinaga M."/>
            <person name="Sasaki M."/>
            <person name="Togashi T."/>
            <person name="Oyama M."/>
            <person name="Hata H."/>
            <person name="Watanabe M."/>
            <person name="Komatsu T."/>
            <person name="Mizushima-Sugano J."/>
            <person name="Satoh T."/>
            <person name="Shirai Y."/>
            <person name="Takahashi Y."/>
            <person name="Nakagawa K."/>
            <person name="Okumura K."/>
            <person name="Nagase T."/>
            <person name="Nomura N."/>
            <person name="Kikuchi H."/>
            <person name="Masuho Y."/>
            <person name="Yamashita R."/>
            <person name="Nakai K."/>
            <person name="Yada T."/>
            <person name="Nakamura Y."/>
            <person name="Ohara O."/>
            <person name="Isogai T."/>
            <person name="Sugano S."/>
        </authorList>
    </citation>
    <scope>NUCLEOTIDE SEQUENCE [LARGE SCALE MRNA] (ISOFORMS 1 AND 3)</scope>
    <source>
        <tissue>Kidney</tissue>
        <tissue>Placenta</tissue>
        <tissue>Trachea</tissue>
    </source>
</reference>
<reference key="9">
    <citation type="journal article" date="2005" name="DNA Res.">
        <title>Signal sequence and keyword trap in silico for selection of full-length human cDNAs encoding secretion or membrane proteins from oligo-capped cDNA libraries.</title>
        <authorList>
            <person name="Otsuki T."/>
            <person name="Ota T."/>
            <person name="Nishikawa T."/>
            <person name="Hayashi K."/>
            <person name="Suzuki Y."/>
            <person name="Yamamoto J."/>
            <person name="Wakamatsu A."/>
            <person name="Kimura K."/>
            <person name="Sakamoto K."/>
            <person name="Hatano N."/>
            <person name="Kawai Y."/>
            <person name="Ishii S."/>
            <person name="Saito K."/>
            <person name="Kojima S."/>
            <person name="Sugiyama T."/>
            <person name="Ono T."/>
            <person name="Okano K."/>
            <person name="Yoshikawa Y."/>
            <person name="Aotsuka S."/>
            <person name="Sasaki N."/>
            <person name="Hattori A."/>
            <person name="Okumura K."/>
            <person name="Nagai K."/>
            <person name="Sugano S."/>
            <person name="Isogai T."/>
        </authorList>
    </citation>
    <scope>NUCLEOTIDE SEQUENCE [LARGE SCALE MRNA] (ISOFORM 1)</scope>
    <source>
        <tissue>Placenta</tissue>
    </source>
</reference>
<reference key="10">
    <citation type="journal article" date="2006" name="Nature">
        <title>The DNA sequence and biological annotation of human chromosome 1.</title>
        <authorList>
            <person name="Gregory S.G."/>
            <person name="Barlow K.F."/>
            <person name="McLay K.E."/>
            <person name="Kaul R."/>
            <person name="Swarbreck D."/>
            <person name="Dunham A."/>
            <person name="Scott C.E."/>
            <person name="Howe K.L."/>
            <person name="Woodfine K."/>
            <person name="Spencer C.C.A."/>
            <person name="Jones M.C."/>
            <person name="Gillson C."/>
            <person name="Searle S."/>
            <person name="Zhou Y."/>
            <person name="Kokocinski F."/>
            <person name="McDonald L."/>
            <person name="Evans R."/>
            <person name="Phillips K."/>
            <person name="Atkinson A."/>
            <person name="Cooper R."/>
            <person name="Jones C."/>
            <person name="Hall R.E."/>
            <person name="Andrews T.D."/>
            <person name="Lloyd C."/>
            <person name="Ainscough R."/>
            <person name="Almeida J.P."/>
            <person name="Ambrose K.D."/>
            <person name="Anderson F."/>
            <person name="Andrew R.W."/>
            <person name="Ashwell R.I.S."/>
            <person name="Aubin K."/>
            <person name="Babbage A.K."/>
            <person name="Bagguley C.L."/>
            <person name="Bailey J."/>
            <person name="Beasley H."/>
            <person name="Bethel G."/>
            <person name="Bird C.P."/>
            <person name="Bray-Allen S."/>
            <person name="Brown J.Y."/>
            <person name="Brown A.J."/>
            <person name="Buckley D."/>
            <person name="Burton J."/>
            <person name="Bye J."/>
            <person name="Carder C."/>
            <person name="Chapman J.C."/>
            <person name="Clark S.Y."/>
            <person name="Clarke G."/>
            <person name="Clee C."/>
            <person name="Cobley V."/>
            <person name="Collier R.E."/>
            <person name="Corby N."/>
            <person name="Coville G.J."/>
            <person name="Davies J."/>
            <person name="Deadman R."/>
            <person name="Dunn M."/>
            <person name="Earthrowl M."/>
            <person name="Ellington A.G."/>
            <person name="Errington H."/>
            <person name="Frankish A."/>
            <person name="Frankland J."/>
            <person name="French L."/>
            <person name="Garner P."/>
            <person name="Garnett J."/>
            <person name="Gay L."/>
            <person name="Ghori M.R.J."/>
            <person name="Gibson R."/>
            <person name="Gilby L.M."/>
            <person name="Gillett W."/>
            <person name="Glithero R.J."/>
            <person name="Grafham D.V."/>
            <person name="Griffiths C."/>
            <person name="Griffiths-Jones S."/>
            <person name="Grocock R."/>
            <person name="Hammond S."/>
            <person name="Harrison E.S.I."/>
            <person name="Hart E."/>
            <person name="Haugen E."/>
            <person name="Heath P.D."/>
            <person name="Holmes S."/>
            <person name="Holt K."/>
            <person name="Howden P.J."/>
            <person name="Hunt A.R."/>
            <person name="Hunt S.E."/>
            <person name="Hunter G."/>
            <person name="Isherwood J."/>
            <person name="James R."/>
            <person name="Johnson C."/>
            <person name="Johnson D."/>
            <person name="Joy A."/>
            <person name="Kay M."/>
            <person name="Kershaw J.K."/>
            <person name="Kibukawa M."/>
            <person name="Kimberley A.M."/>
            <person name="King A."/>
            <person name="Knights A.J."/>
            <person name="Lad H."/>
            <person name="Laird G."/>
            <person name="Lawlor S."/>
            <person name="Leongamornlert D.A."/>
            <person name="Lloyd D.M."/>
            <person name="Loveland J."/>
            <person name="Lovell J."/>
            <person name="Lush M.J."/>
            <person name="Lyne R."/>
            <person name="Martin S."/>
            <person name="Mashreghi-Mohammadi M."/>
            <person name="Matthews L."/>
            <person name="Matthews N.S.W."/>
            <person name="McLaren S."/>
            <person name="Milne S."/>
            <person name="Mistry S."/>
            <person name="Moore M.J.F."/>
            <person name="Nickerson T."/>
            <person name="O'Dell C.N."/>
            <person name="Oliver K."/>
            <person name="Palmeiri A."/>
            <person name="Palmer S.A."/>
            <person name="Parker A."/>
            <person name="Patel D."/>
            <person name="Pearce A.V."/>
            <person name="Peck A.I."/>
            <person name="Pelan S."/>
            <person name="Phelps K."/>
            <person name="Phillimore B.J."/>
            <person name="Plumb R."/>
            <person name="Rajan J."/>
            <person name="Raymond C."/>
            <person name="Rouse G."/>
            <person name="Saenphimmachak C."/>
            <person name="Sehra H.K."/>
            <person name="Sheridan E."/>
            <person name="Shownkeen R."/>
            <person name="Sims S."/>
            <person name="Skuce C.D."/>
            <person name="Smith M."/>
            <person name="Steward C."/>
            <person name="Subramanian S."/>
            <person name="Sycamore N."/>
            <person name="Tracey A."/>
            <person name="Tromans A."/>
            <person name="Van Helmond Z."/>
            <person name="Wall M."/>
            <person name="Wallis J.M."/>
            <person name="White S."/>
            <person name="Whitehead S.L."/>
            <person name="Wilkinson J.E."/>
            <person name="Willey D.L."/>
            <person name="Williams H."/>
            <person name="Wilming L."/>
            <person name="Wray P.W."/>
            <person name="Wu Z."/>
            <person name="Coulson A."/>
            <person name="Vaudin M."/>
            <person name="Sulston J.E."/>
            <person name="Durbin R.M."/>
            <person name="Hubbard T."/>
            <person name="Wooster R."/>
            <person name="Dunham I."/>
            <person name="Carter N.P."/>
            <person name="McVean G."/>
            <person name="Ross M.T."/>
            <person name="Harrow J."/>
            <person name="Olson M.V."/>
            <person name="Beck S."/>
            <person name="Rogers J."/>
            <person name="Bentley D.R."/>
        </authorList>
    </citation>
    <scope>NUCLEOTIDE SEQUENCE [LARGE SCALE GENOMIC DNA]</scope>
</reference>
<reference key="11">
    <citation type="submission" date="2005-09" db="EMBL/GenBank/DDBJ databases">
        <authorList>
            <person name="Mural R.J."/>
            <person name="Istrail S."/>
            <person name="Sutton G.G."/>
            <person name="Florea L."/>
            <person name="Halpern A.L."/>
            <person name="Mobarry C.M."/>
            <person name="Lippert R."/>
            <person name="Walenz B."/>
            <person name="Shatkay H."/>
            <person name="Dew I."/>
            <person name="Miller J.R."/>
            <person name="Flanigan M.J."/>
            <person name="Edwards N.J."/>
            <person name="Bolanos R."/>
            <person name="Fasulo D."/>
            <person name="Halldorsson B.V."/>
            <person name="Hannenhalli S."/>
            <person name="Turner R."/>
            <person name="Yooseph S."/>
            <person name="Lu F."/>
            <person name="Nusskern D.R."/>
            <person name="Shue B.C."/>
            <person name="Zheng X.H."/>
            <person name="Zhong F."/>
            <person name="Delcher A.L."/>
            <person name="Huson D.H."/>
            <person name="Kravitz S.A."/>
            <person name="Mouchard L."/>
            <person name="Reinert K."/>
            <person name="Remington K.A."/>
            <person name="Clark A.G."/>
            <person name="Waterman M.S."/>
            <person name="Eichler E.E."/>
            <person name="Adams M.D."/>
            <person name="Hunkapiller M.W."/>
            <person name="Myers E.W."/>
            <person name="Venter J.C."/>
        </authorList>
    </citation>
    <scope>NUCLEOTIDE SEQUENCE [LARGE SCALE GENOMIC DNA]</scope>
</reference>
<reference key="12">
    <citation type="journal article" date="2004" name="Genome Res.">
        <title>The status, quality, and expansion of the NIH full-length cDNA project: the Mammalian Gene Collection (MGC).</title>
        <authorList>
            <consortium name="The MGC Project Team"/>
        </authorList>
    </citation>
    <scope>NUCLEOTIDE SEQUENCE [LARGE SCALE MRNA] (ISOFORM 1)</scope>
    <source>
        <tissue>Colon</tissue>
        <tissue>Pancreas</tissue>
    </source>
</reference>
<reference key="13">
    <citation type="journal article" date="2004" name="Protein Sci.">
        <title>Signal peptide prediction based on analysis of experimentally verified cleavage sites.</title>
        <authorList>
            <person name="Zhang Z."/>
            <person name="Henzel W.J."/>
        </authorList>
    </citation>
    <scope>PROTEIN SEQUENCE OF 22-36</scope>
</reference>
<reference key="14">
    <citation type="journal article" date="2009" name="J. Proteome Res.">
        <title>Glycoproteomics analysis of human liver tissue by combination of multiple enzyme digestion and hydrazide chemistry.</title>
        <authorList>
            <person name="Chen R."/>
            <person name="Jiang X."/>
            <person name="Sun D."/>
            <person name="Han G."/>
            <person name="Wang F."/>
            <person name="Ye M."/>
            <person name="Wang L."/>
            <person name="Zou H."/>
        </authorList>
    </citation>
    <scope>GLYCOSYLATION [LARGE SCALE ANALYSIS] AT ASN-78 AND ASN-161</scope>
    <source>
        <tissue>Liver</tissue>
    </source>
</reference>
<keyword id="KW-0025">Alternative splicing</keyword>
<keyword id="KW-0903">Direct protein sequencing</keyword>
<keyword id="KW-1015">Disulfide bond</keyword>
<keyword id="KW-0325">Glycoprotein</keyword>
<keyword id="KW-1267">Proteomics identification</keyword>
<keyword id="KW-1185">Reference proteome</keyword>
<keyword id="KW-0964">Secreted</keyword>
<keyword id="KW-0732">Signal</keyword>
<protein>
    <recommendedName>
        <fullName>Tubulointerstitial nephritis antigen-like</fullName>
    </recommendedName>
    <alternativeName>
        <fullName>Glucocorticoid-inducible protein 5</fullName>
    </alternativeName>
    <alternativeName>
        <fullName>Oxidized LDL-responsive gene 2 protein</fullName>
        <shortName>OLRG-2</shortName>
    </alternativeName>
    <alternativeName>
        <fullName>Tubulointerstitial nephritis antigen-related protein</fullName>
        <shortName>TIN Ag-related protein</shortName>
        <shortName>TIN-Ag-RP</shortName>
    </alternativeName>
</protein>
<organism>
    <name type="scientific">Homo sapiens</name>
    <name type="common">Human</name>
    <dbReference type="NCBI Taxonomy" id="9606"/>
    <lineage>
        <taxon>Eukaryota</taxon>
        <taxon>Metazoa</taxon>
        <taxon>Chordata</taxon>
        <taxon>Craniata</taxon>
        <taxon>Vertebrata</taxon>
        <taxon>Euteleostomi</taxon>
        <taxon>Mammalia</taxon>
        <taxon>Eutheria</taxon>
        <taxon>Euarchontoglires</taxon>
        <taxon>Primates</taxon>
        <taxon>Haplorrhini</taxon>
        <taxon>Catarrhini</taxon>
        <taxon>Hominidae</taxon>
        <taxon>Homo</taxon>
    </lineage>
</organism>
<dbReference type="EMBL" id="AF236155">
    <property type="protein sequence ID" value="AAG40154.1"/>
    <property type="molecule type" value="Genomic_DNA"/>
</dbReference>
<dbReference type="EMBL" id="AF236151">
    <property type="protein sequence ID" value="AAG40154.1"/>
    <property type="status" value="JOINED"/>
    <property type="molecule type" value="Genomic_DNA"/>
</dbReference>
<dbReference type="EMBL" id="AF236152">
    <property type="protein sequence ID" value="AAG40154.1"/>
    <property type="status" value="JOINED"/>
    <property type="molecule type" value="Genomic_DNA"/>
</dbReference>
<dbReference type="EMBL" id="AF236153">
    <property type="protein sequence ID" value="AAG40154.1"/>
    <property type="status" value="JOINED"/>
    <property type="molecule type" value="Genomic_DNA"/>
</dbReference>
<dbReference type="EMBL" id="AF236154">
    <property type="protein sequence ID" value="AAG40154.1"/>
    <property type="status" value="JOINED"/>
    <property type="molecule type" value="Genomic_DNA"/>
</dbReference>
<dbReference type="EMBL" id="AF236150">
    <property type="protein sequence ID" value="AAG38876.1"/>
    <property type="molecule type" value="mRNA"/>
</dbReference>
<dbReference type="EMBL" id="AF205436">
    <property type="protein sequence ID" value="AAG33699.1"/>
    <property type="molecule type" value="mRNA"/>
</dbReference>
<dbReference type="EMBL" id="AB050716">
    <property type="protein sequence ID" value="BAB18636.1"/>
    <property type="molecule type" value="mRNA"/>
</dbReference>
<dbReference type="EMBL" id="AB050719">
    <property type="protein sequence ID" value="BAB18727.1"/>
    <property type="molecule type" value="Genomic_DNA"/>
</dbReference>
<dbReference type="EMBL" id="AK074124">
    <property type="protein sequence ID" value="BAB84950.1"/>
    <property type="molecule type" value="mRNA"/>
</dbReference>
<dbReference type="EMBL" id="AY358421">
    <property type="protein sequence ID" value="AAQ88787.1"/>
    <property type="molecule type" value="mRNA"/>
</dbReference>
<dbReference type="EMBL" id="AF289569">
    <property type="protein sequence ID" value="AAL55753.1"/>
    <property type="molecule type" value="mRNA"/>
</dbReference>
<dbReference type="EMBL" id="AK027839">
    <property type="protein sequence ID" value="BAB55403.1"/>
    <property type="status" value="ALT_INIT"/>
    <property type="molecule type" value="mRNA"/>
</dbReference>
<dbReference type="EMBL" id="AK292770">
    <property type="protein sequence ID" value="BAF85459.1"/>
    <property type="molecule type" value="mRNA"/>
</dbReference>
<dbReference type="EMBL" id="AK298382">
    <property type="protein sequence ID" value="BAG60618.1"/>
    <property type="molecule type" value="mRNA"/>
</dbReference>
<dbReference type="EMBL" id="AK075398">
    <property type="protein sequence ID" value="BAC11596.1"/>
    <property type="molecule type" value="mRNA"/>
</dbReference>
<dbReference type="EMBL" id="AC114488">
    <property type="status" value="NOT_ANNOTATED_CDS"/>
    <property type="molecule type" value="Genomic_DNA"/>
</dbReference>
<dbReference type="EMBL" id="CH471059">
    <property type="protein sequence ID" value="EAX07604.1"/>
    <property type="molecule type" value="Genomic_DNA"/>
</dbReference>
<dbReference type="EMBL" id="CH471059">
    <property type="protein sequence ID" value="EAX07605.1"/>
    <property type="molecule type" value="Genomic_DNA"/>
</dbReference>
<dbReference type="EMBL" id="CH471059">
    <property type="protein sequence ID" value="EAX07606.1"/>
    <property type="molecule type" value="Genomic_DNA"/>
</dbReference>
<dbReference type="EMBL" id="BC009048">
    <property type="protein sequence ID" value="AAH09048.1"/>
    <property type="status" value="ALT_INIT"/>
    <property type="molecule type" value="mRNA"/>
</dbReference>
<dbReference type="EMBL" id="BC064633">
    <property type="protein sequence ID" value="AAH64633.1"/>
    <property type="molecule type" value="mRNA"/>
</dbReference>
<dbReference type="CCDS" id="CCDS343.1">
    <molecule id="Q9GZM7-1"/>
</dbReference>
<dbReference type="CCDS" id="CCDS55586.1">
    <molecule id="Q9GZM7-3"/>
</dbReference>
<dbReference type="RefSeq" id="NP_001191343.1">
    <molecule id="Q9GZM7-3"/>
    <property type="nucleotide sequence ID" value="NM_001204414.2"/>
</dbReference>
<dbReference type="RefSeq" id="NP_001191344.1">
    <property type="nucleotide sequence ID" value="NM_001204415.1"/>
</dbReference>
<dbReference type="RefSeq" id="NP_071447.1">
    <molecule id="Q9GZM7-1"/>
    <property type="nucleotide sequence ID" value="NM_022164.3"/>
</dbReference>
<dbReference type="SMR" id="Q9GZM7"/>
<dbReference type="BioGRID" id="122078">
    <property type="interactions" value="70"/>
</dbReference>
<dbReference type="FunCoup" id="Q9GZM7">
    <property type="interactions" value="214"/>
</dbReference>
<dbReference type="IntAct" id="Q9GZM7">
    <property type="interactions" value="73"/>
</dbReference>
<dbReference type="MINT" id="Q9GZM7"/>
<dbReference type="STRING" id="9606.ENSP00000271064"/>
<dbReference type="MEROPS" id="C01.975"/>
<dbReference type="GlyConnect" id="1864">
    <property type="glycosylation" value="7 N-Linked glycans (2 sites)"/>
</dbReference>
<dbReference type="GlyCosmos" id="Q9GZM7">
    <property type="glycosylation" value="2 sites, 7 glycans"/>
</dbReference>
<dbReference type="GlyGen" id="Q9GZM7">
    <property type="glycosylation" value="3 sites, 100 N-linked glycans (2 sites), 1 O-linked glycan (1 site)"/>
</dbReference>
<dbReference type="iPTMnet" id="Q9GZM7"/>
<dbReference type="PhosphoSitePlus" id="Q9GZM7"/>
<dbReference type="SwissPalm" id="Q9GZM7"/>
<dbReference type="BioMuta" id="TINAGL1"/>
<dbReference type="DMDM" id="61213628"/>
<dbReference type="jPOST" id="Q9GZM7"/>
<dbReference type="MassIVE" id="Q9GZM7"/>
<dbReference type="PaxDb" id="9606-ENSP00000271064"/>
<dbReference type="PeptideAtlas" id="Q9GZM7"/>
<dbReference type="ProteomicsDB" id="80089">
    <molecule id="Q9GZM7-1"/>
</dbReference>
<dbReference type="ProteomicsDB" id="80090">
    <molecule id="Q9GZM7-2"/>
</dbReference>
<dbReference type="ProteomicsDB" id="80091">
    <molecule id="Q9GZM7-3"/>
</dbReference>
<dbReference type="Antibodypedia" id="31121">
    <property type="antibodies" value="191 antibodies from 26 providers"/>
</dbReference>
<dbReference type="DNASU" id="64129"/>
<dbReference type="Ensembl" id="ENST00000271064.12">
    <molecule id="Q9GZM7-1"/>
    <property type="protein sequence ID" value="ENSP00000271064.7"/>
    <property type="gene ID" value="ENSG00000142910.16"/>
</dbReference>
<dbReference type="Ensembl" id="ENST00000457433.6">
    <molecule id="Q9GZM7-3"/>
    <property type="protein sequence ID" value="ENSP00000395137.2"/>
    <property type="gene ID" value="ENSG00000142910.16"/>
</dbReference>
<dbReference type="GeneID" id="64129"/>
<dbReference type="KEGG" id="hsa:64129"/>
<dbReference type="MANE-Select" id="ENST00000271064.12">
    <property type="protein sequence ID" value="ENSP00000271064.7"/>
    <property type="RefSeq nucleotide sequence ID" value="NM_022164.3"/>
    <property type="RefSeq protein sequence ID" value="NP_071447.1"/>
</dbReference>
<dbReference type="UCSC" id="uc001bta.4">
    <molecule id="Q9GZM7-1"/>
    <property type="organism name" value="human"/>
</dbReference>
<dbReference type="AGR" id="HGNC:19168"/>
<dbReference type="CTD" id="64129"/>
<dbReference type="DisGeNET" id="64129"/>
<dbReference type="GeneCards" id="TINAGL1"/>
<dbReference type="HGNC" id="HGNC:19168">
    <property type="gene designation" value="TINAGL1"/>
</dbReference>
<dbReference type="HPA" id="ENSG00000142910">
    <property type="expression patterns" value="Low tissue specificity"/>
</dbReference>
<dbReference type="MIM" id="616064">
    <property type="type" value="gene"/>
</dbReference>
<dbReference type="neXtProt" id="NX_Q9GZM7"/>
<dbReference type="OpenTargets" id="ENSG00000142910"/>
<dbReference type="PharmGKB" id="PA38810"/>
<dbReference type="VEuPathDB" id="HostDB:ENSG00000142910"/>
<dbReference type="eggNOG" id="KOG1544">
    <property type="taxonomic scope" value="Eukaryota"/>
</dbReference>
<dbReference type="GeneTree" id="ENSGT00940000160023"/>
<dbReference type="InParanoid" id="Q9GZM7"/>
<dbReference type="OMA" id="AEIYHSG"/>
<dbReference type="OrthoDB" id="190265at2759"/>
<dbReference type="PAN-GO" id="Q9GZM7">
    <property type="GO annotations" value="2 GO annotations based on evolutionary models"/>
</dbReference>
<dbReference type="PhylomeDB" id="Q9GZM7"/>
<dbReference type="TreeFam" id="TF313765"/>
<dbReference type="PathwayCommons" id="Q9GZM7"/>
<dbReference type="SignaLink" id="Q9GZM7"/>
<dbReference type="BioGRID-ORCS" id="64129">
    <property type="hits" value="14 hits in 1151 CRISPR screens"/>
</dbReference>
<dbReference type="ChiTaRS" id="TINAGL1">
    <property type="organism name" value="human"/>
</dbReference>
<dbReference type="GeneWiki" id="TINAGL1"/>
<dbReference type="GenomeRNAi" id="64129"/>
<dbReference type="Pharos" id="Q9GZM7">
    <property type="development level" value="Tbio"/>
</dbReference>
<dbReference type="PRO" id="PR:Q9GZM7"/>
<dbReference type="Proteomes" id="UP000005640">
    <property type="component" value="Chromosome 1"/>
</dbReference>
<dbReference type="RNAct" id="Q9GZM7">
    <property type="molecule type" value="protein"/>
</dbReference>
<dbReference type="Bgee" id="ENSG00000142910">
    <property type="expression patterns" value="Expressed in metanephros cortex and 138 other cell types or tissues"/>
</dbReference>
<dbReference type="ExpressionAtlas" id="Q9GZM7">
    <property type="expression patterns" value="baseline and differential"/>
</dbReference>
<dbReference type="GO" id="GO:0062023">
    <property type="term" value="C:collagen-containing extracellular matrix"/>
    <property type="evidence" value="ECO:0007005"/>
    <property type="project" value="BHF-UCL"/>
</dbReference>
<dbReference type="GO" id="GO:0070062">
    <property type="term" value="C:extracellular exosome"/>
    <property type="evidence" value="ECO:0007005"/>
    <property type="project" value="UniProtKB"/>
</dbReference>
<dbReference type="GO" id="GO:0005576">
    <property type="term" value="C:extracellular region"/>
    <property type="evidence" value="ECO:0000303"/>
    <property type="project" value="UniProtKB"/>
</dbReference>
<dbReference type="GO" id="GO:0005615">
    <property type="term" value="C:extracellular space"/>
    <property type="evidence" value="ECO:0000318"/>
    <property type="project" value="GO_Central"/>
</dbReference>
<dbReference type="GO" id="GO:0005764">
    <property type="term" value="C:lysosome"/>
    <property type="evidence" value="ECO:0000318"/>
    <property type="project" value="GO_Central"/>
</dbReference>
<dbReference type="GO" id="GO:0005201">
    <property type="term" value="F:extracellular matrix structural constituent"/>
    <property type="evidence" value="ECO:0000303"/>
    <property type="project" value="UniProtKB"/>
</dbReference>
<dbReference type="GO" id="GO:0043236">
    <property type="term" value="F:laminin binding"/>
    <property type="evidence" value="ECO:0007669"/>
    <property type="project" value="Ensembl"/>
</dbReference>
<dbReference type="GO" id="GO:0016197">
    <property type="term" value="P:endosomal transport"/>
    <property type="evidence" value="ECO:0000304"/>
    <property type="project" value="UniProtKB"/>
</dbReference>
<dbReference type="CDD" id="cd02620">
    <property type="entry name" value="Peptidase_C1A_CathepsinB"/>
    <property type="match status" value="1"/>
</dbReference>
<dbReference type="FunFam" id="3.90.70.10:FF:000037">
    <property type="entry name" value="Tubulointerstitial nephritis antigen-like 1"/>
    <property type="match status" value="1"/>
</dbReference>
<dbReference type="Gene3D" id="3.90.70.10">
    <property type="entry name" value="Cysteine proteinases"/>
    <property type="match status" value="1"/>
</dbReference>
<dbReference type="InterPro" id="IPR038765">
    <property type="entry name" value="Papain-like_cys_pep_sf"/>
</dbReference>
<dbReference type="InterPro" id="IPR025660">
    <property type="entry name" value="Pept_his_AS"/>
</dbReference>
<dbReference type="InterPro" id="IPR013128">
    <property type="entry name" value="Peptidase_C1A"/>
</dbReference>
<dbReference type="InterPro" id="IPR000668">
    <property type="entry name" value="Peptidase_C1A_C"/>
</dbReference>
<dbReference type="InterPro" id="IPR001212">
    <property type="entry name" value="Somatomedin_B_dom"/>
</dbReference>
<dbReference type="PANTHER" id="PTHR12411">
    <property type="entry name" value="CYSTEINE PROTEASE FAMILY C1-RELATED"/>
    <property type="match status" value="1"/>
</dbReference>
<dbReference type="Pfam" id="PF00112">
    <property type="entry name" value="Peptidase_C1"/>
    <property type="match status" value="1"/>
</dbReference>
<dbReference type="SMART" id="SM00645">
    <property type="entry name" value="Pept_C1"/>
    <property type="match status" value="1"/>
</dbReference>
<dbReference type="SUPFAM" id="SSF54001">
    <property type="entry name" value="Cysteine proteinases"/>
    <property type="match status" value="1"/>
</dbReference>
<dbReference type="PROSITE" id="PS00524">
    <property type="entry name" value="SMB_1"/>
    <property type="match status" value="1"/>
</dbReference>
<dbReference type="PROSITE" id="PS50958">
    <property type="entry name" value="SMB_2"/>
    <property type="match status" value="1"/>
</dbReference>
<dbReference type="PROSITE" id="PS00639">
    <property type="entry name" value="THIOL_PROTEASE_HIS"/>
    <property type="match status" value="1"/>
</dbReference>
<comment type="function">
    <text evidence="1">May be implicated in the adrenocortical zonation and in mechanisms for repressing the CYP11B1 gene expression in adrenocortical cells. This is a non catalytic peptidase C1 family protein (By similarity).</text>
</comment>
<comment type="interaction">
    <interactant intactId="EBI-715869">
        <id>Q9GZM7</id>
    </interactant>
    <interactant intactId="EBI-2949658">
        <id>O95429</id>
        <label>BAG4</label>
    </interactant>
    <organismsDiffer>false</organismsDiffer>
    <experiments>3</experiments>
</comment>
<comment type="interaction">
    <interactant intactId="EBI-715869">
        <id>Q9GZM7</id>
    </interactant>
    <interactant intactId="EBI-10176379">
        <id>P59991</id>
        <label>KRTAP12-2</label>
    </interactant>
    <organismsDiffer>false</organismsDiffer>
    <experiments>3</experiments>
</comment>
<comment type="interaction">
    <interactant intactId="EBI-715869">
        <id>Q9GZM7</id>
    </interactant>
    <interactant intactId="EBI-12138495">
        <id>Q99697-2</id>
        <label>PITX2</label>
    </interactant>
    <organismsDiffer>false</organismsDiffer>
    <experiments>3</experiments>
</comment>
<comment type="interaction">
    <interactant intactId="EBI-715869">
        <id>Q9GZM7</id>
    </interactant>
    <interactant intactId="EBI-9027467">
        <id>O75360</id>
        <label>PROP1</label>
    </interactant>
    <organismsDiffer>false</organismsDiffer>
    <experiments>3</experiments>
</comment>
<comment type="interaction">
    <interactant intactId="EBI-715869">
        <id>Q9GZM7</id>
    </interactant>
    <interactant intactId="EBI-358993">
        <id>Q15645</id>
        <label>TRIP13</label>
    </interactant>
    <organismsDiffer>false</organismsDiffer>
    <experiments>6</experiments>
</comment>
<comment type="interaction">
    <interactant intactId="EBI-10303636">
        <id>Q9GZM7-3</id>
    </interactant>
    <interactant intactId="EBI-10176379">
        <id>P59991</id>
        <label>KRTAP12-2</label>
    </interactant>
    <organismsDiffer>false</organismsDiffer>
    <experiments>3</experiments>
</comment>
<comment type="interaction">
    <interactant intactId="EBI-10303636">
        <id>Q9GZM7-3</id>
    </interactant>
    <interactant intactId="EBI-10172511">
        <id>Q9BYR5</id>
        <label>KRTAP4-2</label>
    </interactant>
    <organismsDiffer>false</organismsDiffer>
    <experiments>3</experiments>
</comment>
<comment type="interaction">
    <interactant intactId="EBI-10303636">
        <id>Q9GZM7-3</id>
    </interactant>
    <interactant intactId="EBI-945833">
        <id>Q7Z3S9</id>
        <label>NOTCH2NLA</label>
    </interactant>
    <organismsDiffer>false</organismsDiffer>
    <experiments>3</experiments>
</comment>
<comment type="interaction">
    <interactant intactId="EBI-10303636">
        <id>Q9GZM7-3</id>
    </interactant>
    <interactant intactId="EBI-740322">
        <id>Q93062</id>
        <label>RBPMS</label>
    </interactant>
    <organismsDiffer>false</organismsDiffer>
    <experiments>3</experiments>
</comment>
<comment type="interaction">
    <interactant intactId="EBI-10303636">
        <id>Q9GZM7-3</id>
    </interactant>
    <interactant intactId="EBI-358993">
        <id>Q15645</id>
        <label>TRIP13</label>
    </interactant>
    <organismsDiffer>false</organismsDiffer>
    <experiments>3</experiments>
</comment>
<comment type="subcellular location">
    <subcellularLocation>
        <location evidence="4 5">Secreted</location>
    </subcellularLocation>
</comment>
<comment type="alternative products">
    <event type="alternative splicing"/>
    <isoform>
        <id>Q9GZM7-1</id>
        <name>1</name>
        <sequence type="displayed"/>
    </isoform>
    <isoform>
        <id>Q9GZM7-2</id>
        <name>2</name>
        <sequence type="described" ref="VSP_013094 VSP_013095 VSP_013096 VSP_013097 VSP_013098"/>
    </isoform>
    <isoform>
        <id>Q9GZM7-3</id>
        <name>3</name>
        <sequence type="described" ref="VSP_043712"/>
    </isoform>
</comment>
<comment type="tissue specificity">
    <text evidence="5">Highly expressed in aorta, heart, placenta, kidney and a colorectal adenocarcinoma cell line. Moderately expressed in skeletal muscle, pancreas, lung, lymph nodes, adrenal gland, bone marrow and thyroid. Weakly expressed in colon, small intestine, ovary, spleen, testis and prostate. Predominantly found in vascular smooth muscle cells, but also in cardiac and skeletal muscle cells as well as kidney.</text>
</comment>
<comment type="PTM">
    <text evidence="5 7">Glycosylated.</text>
</comment>
<comment type="similarity">
    <text evidence="3">Belongs to the peptidase C1 family.</text>
</comment>
<comment type="sequence caution" evidence="11">
    <conflict type="erroneous initiation">
        <sequence resource="EMBL-CDS" id="AAH09048"/>
    </conflict>
</comment>
<comment type="sequence caution" evidence="11">
    <conflict type="erroneous initiation">
        <sequence resource="EMBL-CDS" id="BAB55403"/>
    </conflict>
</comment>
<gene>
    <name type="primary">TINAGL1</name>
    <name type="synonym">GIS5</name>
    <name type="synonym">LCN7</name>
    <name type="synonym">OLRG2</name>
    <name type="synonym">TINAGL</name>
    <name type="ORF">PP6614</name>
    <name type="ORF">PSEC0088</name>
    <name type="ORF">UNQ204/PRO230</name>
</gene>